<feature type="signal peptide" evidence="2">
    <location>
        <begin position="1"/>
        <end position="25"/>
    </location>
</feature>
<feature type="chain" id="PRO_0000024901" description="Pectate lyase 5">
    <location>
        <begin position="26"/>
        <end position="396"/>
    </location>
</feature>
<feature type="active site" evidence="2">
    <location>
        <position position="273"/>
    </location>
</feature>
<feature type="binding site" evidence="1">
    <location>
        <position position="193"/>
    </location>
    <ligand>
        <name>Ca(2+)</name>
        <dbReference type="ChEBI" id="CHEBI:29108"/>
    </ligand>
</feature>
<feature type="binding site" evidence="1">
    <location>
        <position position="217"/>
    </location>
    <ligand>
        <name>Ca(2+)</name>
        <dbReference type="ChEBI" id="CHEBI:29108"/>
    </ligand>
</feature>
<feature type="binding site" evidence="1">
    <location>
        <position position="221"/>
    </location>
    <ligand>
        <name>Ca(2+)</name>
        <dbReference type="ChEBI" id="CHEBI:29108"/>
    </ligand>
</feature>
<feature type="glycosylation site" description="N-linked (GlcNAc...) asparagine" evidence="2">
    <location>
        <position position="36"/>
    </location>
</feature>
<feature type="disulfide bond" evidence="1">
    <location>
        <begin position="53"/>
        <end position="70"/>
    </location>
</feature>
<feature type="sequence variant">
    <original>E</original>
    <variation>D</variation>
    <location>
        <position position="92"/>
    </location>
</feature>
<feature type="sequence conflict" description="In Ref. 3; AA sequence." evidence="5" ref="3">
    <original>T</original>
    <variation>W</variation>
    <location>
        <position position="304"/>
    </location>
</feature>
<comment type="function">
    <text evidence="1">Has pectate lyase activity.</text>
</comment>
<comment type="catalytic activity">
    <reaction>
        <text>Eliminative cleavage of (1-&gt;4)-alpha-D-galacturonan to give oligosaccharides with 4-deoxy-alpha-D-galact-4-enuronosyl groups at their non-reducing ends.</text>
        <dbReference type="EC" id="4.2.2.2"/>
    </reaction>
</comment>
<comment type="cofactor">
    <cofactor evidence="1">
        <name>Ca(2+)</name>
        <dbReference type="ChEBI" id="CHEBI:29108"/>
    </cofactor>
    <text evidence="1">Binds 1 Ca(2+) ion.</text>
</comment>
<comment type="pathway">
    <text>Glycan metabolism; pectin degradation; 2-dehydro-3-deoxy-D-gluconate from pectin: step 2/5.</text>
</comment>
<comment type="subunit">
    <text>Monomer.</text>
</comment>
<comment type="tissue specificity">
    <text>Pollen and flowers.</text>
</comment>
<comment type="PTM">
    <text>The N-terminus is blocked.</text>
</comment>
<comment type="allergen">
    <text evidence="3 4">Causes an allergic reaction in human. This is one of the major allergens of the ragweed pollen.</text>
</comment>
<comment type="similarity">
    <text evidence="5">Belongs to the polysaccharide lyase 1 family. Amb a subfamily.</text>
</comment>
<dbReference type="EC" id="4.2.2.2"/>
<dbReference type="EMBL" id="M63116">
    <property type="status" value="NOT_ANNOTATED_CDS"/>
    <property type="molecule type" value="mRNA"/>
</dbReference>
<dbReference type="EMBL" id="M80558">
    <property type="protein sequence ID" value="AAA32665.1"/>
    <property type="molecule type" value="mRNA"/>
</dbReference>
<dbReference type="PIR" id="A39099">
    <property type="entry name" value="A39099"/>
</dbReference>
<dbReference type="SMR" id="P27759"/>
<dbReference type="Allergome" id="24">
    <property type="allergen name" value="Amb a 1"/>
</dbReference>
<dbReference type="Allergome" id="787">
    <property type="allergen name" value="Amb a 1.0101"/>
</dbReference>
<dbReference type="CAZy" id="PL1">
    <property type="family name" value="Polysaccharide Lyase Family 1"/>
</dbReference>
<dbReference type="UniPathway" id="UPA00545">
    <property type="reaction ID" value="UER00824"/>
</dbReference>
<dbReference type="GO" id="GO:0046872">
    <property type="term" value="F:metal ion binding"/>
    <property type="evidence" value="ECO:0007669"/>
    <property type="project" value="UniProtKB-KW"/>
</dbReference>
<dbReference type="GO" id="GO:0030570">
    <property type="term" value="F:pectate lyase activity"/>
    <property type="evidence" value="ECO:0007669"/>
    <property type="project" value="UniProtKB-EC"/>
</dbReference>
<dbReference type="GO" id="GO:0045490">
    <property type="term" value="P:pectin catabolic process"/>
    <property type="evidence" value="ECO:0007669"/>
    <property type="project" value="UniProtKB-UniPathway"/>
</dbReference>
<dbReference type="Gene3D" id="2.160.20.10">
    <property type="entry name" value="Single-stranded right-handed beta-helix, Pectin lyase-like"/>
    <property type="match status" value="1"/>
</dbReference>
<dbReference type="InterPro" id="IPR018082">
    <property type="entry name" value="AmbAllergen"/>
</dbReference>
<dbReference type="InterPro" id="IPR002022">
    <property type="entry name" value="Pec_lyase"/>
</dbReference>
<dbReference type="InterPro" id="IPR012334">
    <property type="entry name" value="Pectin_lyas_fold"/>
</dbReference>
<dbReference type="InterPro" id="IPR011050">
    <property type="entry name" value="Pectin_lyase_fold/virulence"/>
</dbReference>
<dbReference type="InterPro" id="IPR045032">
    <property type="entry name" value="PEL"/>
</dbReference>
<dbReference type="PANTHER" id="PTHR31683:SF159">
    <property type="entry name" value="PECTATE LYASE"/>
    <property type="match status" value="1"/>
</dbReference>
<dbReference type="PANTHER" id="PTHR31683">
    <property type="entry name" value="PECTATE LYASE 18-RELATED"/>
    <property type="match status" value="1"/>
</dbReference>
<dbReference type="Pfam" id="PF00544">
    <property type="entry name" value="Pectate_lyase_4"/>
    <property type="match status" value="1"/>
</dbReference>
<dbReference type="PRINTS" id="PR00807">
    <property type="entry name" value="AMBALLERGEN"/>
</dbReference>
<dbReference type="SMART" id="SM00656">
    <property type="entry name" value="Amb_all"/>
    <property type="match status" value="1"/>
</dbReference>
<dbReference type="SUPFAM" id="SSF51126">
    <property type="entry name" value="Pectin lyase-like"/>
    <property type="match status" value="1"/>
</dbReference>
<accession>P27759</accession>
<sequence length="396" mass="42709">MGIKHCCYILYFTLALVTLLQPVRSAEDLQEILPVNETRRLTTSGAYNIIDGCWRGKADWAENRKALADCAQGFGKGTVGGKDGDIYTVTSELDDDVANPKEGTLRFGAAQNRPLWIIFERDMVIRLDKEMVVNSDKTIDGRGAKVEIINAGFTLNGVKNVIIHNINMHDVKVNPGGLIKSNDGPAAPRAGSDGDAISISGSSQIWIDHCSLSKSVDGLVDAKLGTTRLTVSNSLFTQHQFVLLFGAGDENIEDRGMLATVAFNTFTDNVDQRMPRCRHGFFQVVNNNYDKWGSYAIGGSASPTILSQGNRFCAPDERSKKNVLGRHGEAAAESMKWNWRTNKDVLENGAIFVASGVDPVLTPEQSAGMIPAEPGESALSLTSSAGVLSCQPGAPC</sequence>
<protein>
    <recommendedName>
        <fullName>Pectate lyase 5</fullName>
        <ecNumber>4.2.2.2</ecNumber>
    </recommendedName>
    <alternativeName>
        <fullName>Antigen Amb a I</fullName>
    </alternativeName>
    <alternativeName>
        <fullName>Antigen E</fullName>
        <shortName>AgE</shortName>
    </alternativeName>
    <alternativeName>
        <fullName>Pollen allergen Amb a 1.1</fullName>
    </alternativeName>
    <allergenName>Amb a 1.1</allergenName>
</protein>
<keyword id="KW-0020">Allergen</keyword>
<keyword id="KW-0106">Calcium</keyword>
<keyword id="KW-0903">Direct protein sequencing</keyword>
<keyword id="KW-1015">Disulfide bond</keyword>
<keyword id="KW-0325">Glycoprotein</keyword>
<keyword id="KW-0456">Lyase</keyword>
<keyword id="KW-0479">Metal-binding</keyword>
<keyword id="KW-0732">Signal</keyword>
<evidence type="ECO:0000250" key="1"/>
<evidence type="ECO:0000255" key="2"/>
<evidence type="ECO:0000269" key="3">
    <source>
    </source>
</evidence>
<evidence type="ECO:0000269" key="4">
    <source>
    </source>
</evidence>
<evidence type="ECO:0000305" key="5"/>
<reference key="1">
    <citation type="journal article" date="1991" name="J. Biol. Chem.">
        <title>Cloning of Amb a I (antigen E), the major allergen family of short ragweed pollen.</title>
        <authorList>
            <person name="Rafnar T."/>
            <person name="Griffith I.J."/>
            <person name="Kuo M.-C."/>
            <person name="Bond J.F."/>
            <person name="Rogers B.L."/>
            <person name="Klapper D.G."/>
        </authorList>
    </citation>
    <scope>NUCLEOTIDE SEQUENCE [MRNA]</scope>
    <scope>PARTIAL PROTEIN SEQUENCE</scope>
    <scope>ALLERGEN</scope>
    <source>
        <tissue>Pollen</tissue>
    </source>
</reference>
<reference key="2">
    <citation type="journal article" date="1991" name="Int. Arch. Allergy Appl. Immunol.">
        <title>Sequence polymorphism of Amb a I and Amb a II, the major allergens in Ambrosia artemisiifolia (short ragweed).</title>
        <authorList>
            <person name="Griffith I.J."/>
            <person name="Pollock J."/>
            <person name="Klapper D.G."/>
            <person name="Rogers B.L."/>
            <person name="Nault A.K."/>
        </authorList>
    </citation>
    <scope>NUCLEOTIDE SEQUENCE [MRNA]</scope>
    <scope>VARIANTS</scope>
    <source>
        <tissue>Pollen</tissue>
    </source>
</reference>
<reference key="3">
    <citation type="journal article" date="1988" name="Mol. Immunol.">
        <title>Monoclonal antibodies to denatured ragweed pollen allergen Amb a I: characterization, specificity for the denatured allergen, and utilization for the isolation of immunogenic peptides of Amb a I.</title>
        <authorList>
            <person name="Smith J.J."/>
            <person name="Olson J.R."/>
            <person name="Klapper D.G."/>
        </authorList>
    </citation>
    <scope>PROTEIN SEQUENCE OF 256-273 AND 292-306</scope>
    <scope>ALLERGEN</scope>
</reference>
<organism>
    <name type="scientific">Ambrosia artemisiifolia</name>
    <name type="common">Common ragweed</name>
    <dbReference type="NCBI Taxonomy" id="4212"/>
    <lineage>
        <taxon>Eukaryota</taxon>
        <taxon>Viridiplantae</taxon>
        <taxon>Streptophyta</taxon>
        <taxon>Embryophyta</taxon>
        <taxon>Tracheophyta</taxon>
        <taxon>Spermatophyta</taxon>
        <taxon>Magnoliopsida</taxon>
        <taxon>eudicotyledons</taxon>
        <taxon>Gunneridae</taxon>
        <taxon>Pentapetalae</taxon>
        <taxon>asterids</taxon>
        <taxon>campanulids</taxon>
        <taxon>Asterales</taxon>
        <taxon>Asteraceae</taxon>
        <taxon>Asteroideae</taxon>
        <taxon>Heliantheae alliance</taxon>
        <taxon>Heliantheae</taxon>
        <taxon>Ambrosia</taxon>
    </lineage>
</organism>
<proteinExistence type="evidence at protein level"/>
<name>PLY5_AMBAR</name>